<reference key="1">
    <citation type="submission" date="2007-06" db="EMBL/GenBank/DDBJ databases">
        <authorList>
            <person name="Dodson R.J."/>
            <person name="Harkins D."/>
            <person name="Paulsen I.T."/>
        </authorList>
    </citation>
    <scope>NUCLEOTIDE SEQUENCE [LARGE SCALE GENOMIC DNA]</scope>
    <source>
        <strain>DSM 24068 / PA7</strain>
    </source>
</reference>
<dbReference type="EC" id="2.8.1.10" evidence="1"/>
<dbReference type="EMBL" id="CP000744">
    <property type="protein sequence ID" value="ABR85522.1"/>
    <property type="molecule type" value="Genomic_DNA"/>
</dbReference>
<dbReference type="RefSeq" id="WP_012073989.1">
    <property type="nucleotide sequence ID" value="NC_009656.1"/>
</dbReference>
<dbReference type="SMR" id="A6UYJ0"/>
<dbReference type="KEGG" id="pap:PSPA7_0480"/>
<dbReference type="HOGENOM" id="CLU_062233_1_1_6"/>
<dbReference type="UniPathway" id="UPA00060"/>
<dbReference type="Proteomes" id="UP000001582">
    <property type="component" value="Chromosome"/>
</dbReference>
<dbReference type="GO" id="GO:0005737">
    <property type="term" value="C:cytoplasm"/>
    <property type="evidence" value="ECO:0007669"/>
    <property type="project" value="UniProtKB-SubCell"/>
</dbReference>
<dbReference type="GO" id="GO:1990107">
    <property type="term" value="F:thiazole synthase activity"/>
    <property type="evidence" value="ECO:0007669"/>
    <property type="project" value="UniProtKB-EC"/>
</dbReference>
<dbReference type="GO" id="GO:0009229">
    <property type="term" value="P:thiamine diphosphate biosynthetic process"/>
    <property type="evidence" value="ECO:0007669"/>
    <property type="project" value="UniProtKB-UniRule"/>
</dbReference>
<dbReference type="CDD" id="cd04728">
    <property type="entry name" value="ThiG"/>
    <property type="match status" value="1"/>
</dbReference>
<dbReference type="Gene3D" id="3.20.20.70">
    <property type="entry name" value="Aldolase class I"/>
    <property type="match status" value="1"/>
</dbReference>
<dbReference type="HAMAP" id="MF_00443">
    <property type="entry name" value="ThiG"/>
    <property type="match status" value="1"/>
</dbReference>
<dbReference type="InterPro" id="IPR013785">
    <property type="entry name" value="Aldolase_TIM"/>
</dbReference>
<dbReference type="InterPro" id="IPR033983">
    <property type="entry name" value="Thiazole_synthase_ThiG"/>
</dbReference>
<dbReference type="InterPro" id="IPR008867">
    <property type="entry name" value="ThiG"/>
</dbReference>
<dbReference type="PANTHER" id="PTHR34266">
    <property type="entry name" value="THIAZOLE SYNTHASE"/>
    <property type="match status" value="1"/>
</dbReference>
<dbReference type="PANTHER" id="PTHR34266:SF2">
    <property type="entry name" value="THIAZOLE SYNTHASE"/>
    <property type="match status" value="1"/>
</dbReference>
<dbReference type="Pfam" id="PF05690">
    <property type="entry name" value="ThiG"/>
    <property type="match status" value="1"/>
</dbReference>
<dbReference type="SUPFAM" id="SSF110399">
    <property type="entry name" value="ThiG-like"/>
    <property type="match status" value="1"/>
</dbReference>
<proteinExistence type="inferred from homology"/>
<name>THIG_PSEP7</name>
<keyword id="KW-0963">Cytoplasm</keyword>
<keyword id="KW-0704">Schiff base</keyword>
<keyword id="KW-0784">Thiamine biosynthesis</keyword>
<keyword id="KW-0808">Transferase</keyword>
<evidence type="ECO:0000255" key="1">
    <source>
        <dbReference type="HAMAP-Rule" id="MF_00443"/>
    </source>
</evidence>
<comment type="function">
    <text evidence="1">Catalyzes the rearrangement of 1-deoxy-D-xylulose 5-phosphate (DXP) to produce the thiazole phosphate moiety of thiamine. Sulfur is provided by the thiocarboxylate moiety of the carrier protein ThiS. In vitro, sulfur can be provided by H(2)S.</text>
</comment>
<comment type="catalytic activity">
    <reaction evidence="1">
        <text>[ThiS sulfur-carrier protein]-C-terminal-Gly-aminoethanethioate + 2-iminoacetate + 1-deoxy-D-xylulose 5-phosphate = [ThiS sulfur-carrier protein]-C-terminal Gly-Gly + 2-[(2R,5Z)-2-carboxy-4-methylthiazol-5(2H)-ylidene]ethyl phosphate + 2 H2O + H(+)</text>
        <dbReference type="Rhea" id="RHEA:26297"/>
        <dbReference type="Rhea" id="RHEA-COMP:12909"/>
        <dbReference type="Rhea" id="RHEA-COMP:19908"/>
        <dbReference type="ChEBI" id="CHEBI:15377"/>
        <dbReference type="ChEBI" id="CHEBI:15378"/>
        <dbReference type="ChEBI" id="CHEBI:57792"/>
        <dbReference type="ChEBI" id="CHEBI:62899"/>
        <dbReference type="ChEBI" id="CHEBI:77846"/>
        <dbReference type="ChEBI" id="CHEBI:90778"/>
        <dbReference type="ChEBI" id="CHEBI:232372"/>
        <dbReference type="EC" id="2.8.1.10"/>
    </reaction>
</comment>
<comment type="pathway">
    <text evidence="1">Cofactor biosynthesis; thiamine diphosphate biosynthesis.</text>
</comment>
<comment type="subunit">
    <text evidence="1">Homotetramer. Forms heterodimers with either ThiH or ThiS.</text>
</comment>
<comment type="subcellular location">
    <subcellularLocation>
        <location evidence="1">Cytoplasm</location>
    </subcellularLocation>
</comment>
<comment type="similarity">
    <text evidence="1">Belongs to the ThiG family.</text>
</comment>
<accession>A6UYJ0</accession>
<protein>
    <recommendedName>
        <fullName evidence="1">Thiazole synthase</fullName>
        <ecNumber evidence="1">2.8.1.10</ecNumber>
    </recommendedName>
</protein>
<gene>
    <name evidence="1" type="primary">thiG</name>
    <name type="ordered locus">PSPA7_0480</name>
</gene>
<sequence>MSQASSTDTPFVIAGRTYGSRLLVGTGKYKDLDETRRAIEASGAEIVTVAVRRTNIGQNPGEPNLLDVIPPDRYTILPNTAGCYDAVEAVRTCRLARELLDGHNLVKLEVLADQKTLFPNVVETLKAAEQLVKDGFDVMVYTSDDPIIARQLAEIGCIAVMPLAGLIGSGLGICNPYNLRIILEEAKVPVLVDAGVGTASDAAIAMELGCEAVLMNTAIAHARDPVMMAEAMKHAIVAGRLAYLAGRMPRKLYASASSPLDGLID</sequence>
<feature type="chain" id="PRO_1000026026" description="Thiazole synthase">
    <location>
        <begin position="1"/>
        <end position="265"/>
    </location>
</feature>
<feature type="active site" description="Schiff-base intermediate with DXP" evidence="1">
    <location>
        <position position="107"/>
    </location>
</feature>
<feature type="binding site" evidence="1">
    <location>
        <position position="168"/>
    </location>
    <ligand>
        <name>1-deoxy-D-xylulose 5-phosphate</name>
        <dbReference type="ChEBI" id="CHEBI:57792"/>
    </ligand>
</feature>
<feature type="binding site" evidence="1">
    <location>
        <begin position="194"/>
        <end position="195"/>
    </location>
    <ligand>
        <name>1-deoxy-D-xylulose 5-phosphate</name>
        <dbReference type="ChEBI" id="CHEBI:57792"/>
    </ligand>
</feature>
<feature type="binding site" evidence="1">
    <location>
        <begin position="216"/>
        <end position="217"/>
    </location>
    <ligand>
        <name>1-deoxy-D-xylulose 5-phosphate</name>
        <dbReference type="ChEBI" id="CHEBI:57792"/>
    </ligand>
</feature>
<organism>
    <name type="scientific">Pseudomonas paraeruginosa (strain DSM 24068 / PA7)</name>
    <name type="common">Pseudomonas aeruginosa (strain PA7)</name>
    <dbReference type="NCBI Taxonomy" id="381754"/>
    <lineage>
        <taxon>Bacteria</taxon>
        <taxon>Pseudomonadati</taxon>
        <taxon>Pseudomonadota</taxon>
        <taxon>Gammaproteobacteria</taxon>
        <taxon>Pseudomonadales</taxon>
        <taxon>Pseudomonadaceae</taxon>
        <taxon>Pseudomonas</taxon>
        <taxon>Pseudomonas paraeruginosa</taxon>
    </lineage>
</organism>